<proteinExistence type="inferred from homology"/>
<accession>B1Y852</accession>
<protein>
    <recommendedName>
        <fullName evidence="1">Aspartate 1-decarboxylase</fullName>
        <ecNumber evidence="1">4.1.1.11</ecNumber>
    </recommendedName>
    <alternativeName>
        <fullName evidence="1">Aspartate alpha-decarboxylase</fullName>
    </alternativeName>
    <component>
        <recommendedName>
            <fullName evidence="1">Aspartate 1-decarboxylase beta chain</fullName>
        </recommendedName>
    </component>
    <component>
        <recommendedName>
            <fullName evidence="1">Aspartate 1-decarboxylase alpha chain</fullName>
        </recommendedName>
    </component>
</protein>
<gene>
    <name evidence="1" type="primary">panD</name>
    <name type="ordered locus">Lcho_2657</name>
</gene>
<sequence>MFRTLLKSKIHRAVVTHCELHYEGSCGIDEDLLDAANLCENEQIHVWNINNGERFVTYVIKAPRGSGIISLNGSAARRASAGDLVIIAAFAQVHEEQVPTHQPKLVFMDEANRIKELRSEPQNPPQTSPLR</sequence>
<name>PAND_LEPCP</name>
<comment type="function">
    <text evidence="1">Catalyzes the pyruvoyl-dependent decarboxylation of aspartate to produce beta-alanine.</text>
</comment>
<comment type="catalytic activity">
    <reaction evidence="1">
        <text>L-aspartate + H(+) = beta-alanine + CO2</text>
        <dbReference type="Rhea" id="RHEA:19497"/>
        <dbReference type="ChEBI" id="CHEBI:15378"/>
        <dbReference type="ChEBI" id="CHEBI:16526"/>
        <dbReference type="ChEBI" id="CHEBI:29991"/>
        <dbReference type="ChEBI" id="CHEBI:57966"/>
        <dbReference type="EC" id="4.1.1.11"/>
    </reaction>
</comment>
<comment type="cofactor">
    <cofactor evidence="1">
        <name>pyruvate</name>
        <dbReference type="ChEBI" id="CHEBI:15361"/>
    </cofactor>
    <text evidence="1">Binds 1 pyruvoyl group covalently per subunit.</text>
</comment>
<comment type="pathway">
    <text evidence="1">Cofactor biosynthesis; (R)-pantothenate biosynthesis; beta-alanine from L-aspartate: step 1/1.</text>
</comment>
<comment type="subunit">
    <text evidence="1">Heterooctamer of four alpha and four beta subunits.</text>
</comment>
<comment type="subcellular location">
    <subcellularLocation>
        <location evidence="1">Cytoplasm</location>
    </subcellularLocation>
</comment>
<comment type="PTM">
    <text evidence="1">Is synthesized initially as an inactive proenzyme, which is activated by self-cleavage at a specific serine bond to produce a beta-subunit with a hydroxyl group at its C-terminus and an alpha-subunit with a pyruvoyl group at its N-terminus.</text>
</comment>
<comment type="similarity">
    <text evidence="1">Belongs to the PanD family.</text>
</comment>
<keyword id="KW-0068">Autocatalytic cleavage</keyword>
<keyword id="KW-0963">Cytoplasm</keyword>
<keyword id="KW-0210">Decarboxylase</keyword>
<keyword id="KW-0456">Lyase</keyword>
<keyword id="KW-0566">Pantothenate biosynthesis</keyword>
<keyword id="KW-0670">Pyruvate</keyword>
<keyword id="KW-1185">Reference proteome</keyword>
<keyword id="KW-0704">Schiff base</keyword>
<keyword id="KW-0865">Zymogen</keyword>
<reference key="1">
    <citation type="submission" date="2008-03" db="EMBL/GenBank/DDBJ databases">
        <title>Complete sequence of Leptothrix cholodnii SP-6.</title>
        <authorList>
            <consortium name="US DOE Joint Genome Institute"/>
            <person name="Copeland A."/>
            <person name="Lucas S."/>
            <person name="Lapidus A."/>
            <person name="Glavina del Rio T."/>
            <person name="Dalin E."/>
            <person name="Tice H."/>
            <person name="Bruce D."/>
            <person name="Goodwin L."/>
            <person name="Pitluck S."/>
            <person name="Chertkov O."/>
            <person name="Brettin T."/>
            <person name="Detter J.C."/>
            <person name="Han C."/>
            <person name="Kuske C.R."/>
            <person name="Schmutz J."/>
            <person name="Larimer F."/>
            <person name="Land M."/>
            <person name="Hauser L."/>
            <person name="Kyrpides N."/>
            <person name="Lykidis A."/>
            <person name="Emerson D."/>
            <person name="Richardson P."/>
        </authorList>
    </citation>
    <scope>NUCLEOTIDE SEQUENCE [LARGE SCALE GENOMIC DNA]</scope>
    <source>
        <strain>ATCC 51168 / LMG 8142 / SP-6</strain>
    </source>
</reference>
<organism>
    <name type="scientific">Leptothrix cholodnii (strain ATCC 51168 / LMG 8142 / SP-6)</name>
    <name type="common">Leptothrix discophora (strain SP-6)</name>
    <dbReference type="NCBI Taxonomy" id="395495"/>
    <lineage>
        <taxon>Bacteria</taxon>
        <taxon>Pseudomonadati</taxon>
        <taxon>Pseudomonadota</taxon>
        <taxon>Betaproteobacteria</taxon>
        <taxon>Burkholderiales</taxon>
        <taxon>Sphaerotilaceae</taxon>
        <taxon>Leptothrix</taxon>
    </lineage>
</organism>
<evidence type="ECO:0000255" key="1">
    <source>
        <dbReference type="HAMAP-Rule" id="MF_00446"/>
    </source>
</evidence>
<feature type="chain" id="PRO_1000124843" description="Aspartate 1-decarboxylase beta chain" evidence="1">
    <location>
        <begin position="1"/>
        <end position="24"/>
    </location>
</feature>
<feature type="chain" id="PRO_1000124844" description="Aspartate 1-decarboxylase alpha chain" evidence="1">
    <location>
        <begin position="25"/>
        <end position="131"/>
    </location>
</feature>
<feature type="active site" description="Schiff-base intermediate with substrate; via pyruvic acid" evidence="1">
    <location>
        <position position="25"/>
    </location>
</feature>
<feature type="active site" description="Proton donor" evidence="1">
    <location>
        <position position="58"/>
    </location>
</feature>
<feature type="binding site" evidence="1">
    <location>
        <position position="57"/>
    </location>
    <ligand>
        <name>substrate</name>
    </ligand>
</feature>
<feature type="binding site" evidence="1">
    <location>
        <begin position="73"/>
        <end position="75"/>
    </location>
    <ligand>
        <name>substrate</name>
    </ligand>
</feature>
<feature type="modified residue" description="Pyruvic acid (Ser)" evidence="1">
    <location>
        <position position="25"/>
    </location>
</feature>
<dbReference type="EC" id="4.1.1.11" evidence="1"/>
<dbReference type="EMBL" id="CP001013">
    <property type="protein sequence ID" value="ACB34922.1"/>
    <property type="molecule type" value="Genomic_DNA"/>
</dbReference>
<dbReference type="RefSeq" id="WP_012347678.1">
    <property type="nucleotide sequence ID" value="NC_010524.1"/>
</dbReference>
<dbReference type="SMR" id="B1Y852"/>
<dbReference type="STRING" id="395495.Lcho_2657"/>
<dbReference type="KEGG" id="lch:Lcho_2657"/>
<dbReference type="eggNOG" id="COG0853">
    <property type="taxonomic scope" value="Bacteria"/>
</dbReference>
<dbReference type="HOGENOM" id="CLU_115305_2_0_4"/>
<dbReference type="OrthoDB" id="9803983at2"/>
<dbReference type="UniPathway" id="UPA00028">
    <property type="reaction ID" value="UER00002"/>
</dbReference>
<dbReference type="Proteomes" id="UP000001693">
    <property type="component" value="Chromosome"/>
</dbReference>
<dbReference type="GO" id="GO:0005829">
    <property type="term" value="C:cytosol"/>
    <property type="evidence" value="ECO:0007669"/>
    <property type="project" value="TreeGrafter"/>
</dbReference>
<dbReference type="GO" id="GO:0004068">
    <property type="term" value="F:aspartate 1-decarboxylase activity"/>
    <property type="evidence" value="ECO:0007669"/>
    <property type="project" value="UniProtKB-UniRule"/>
</dbReference>
<dbReference type="GO" id="GO:0006523">
    <property type="term" value="P:alanine biosynthetic process"/>
    <property type="evidence" value="ECO:0007669"/>
    <property type="project" value="InterPro"/>
</dbReference>
<dbReference type="GO" id="GO:0015940">
    <property type="term" value="P:pantothenate biosynthetic process"/>
    <property type="evidence" value="ECO:0007669"/>
    <property type="project" value="UniProtKB-UniRule"/>
</dbReference>
<dbReference type="CDD" id="cd06919">
    <property type="entry name" value="Asp_decarbox"/>
    <property type="match status" value="1"/>
</dbReference>
<dbReference type="Gene3D" id="2.40.40.20">
    <property type="match status" value="1"/>
</dbReference>
<dbReference type="HAMAP" id="MF_00446">
    <property type="entry name" value="PanD"/>
    <property type="match status" value="1"/>
</dbReference>
<dbReference type="InterPro" id="IPR009010">
    <property type="entry name" value="Asp_de-COase-like_dom_sf"/>
</dbReference>
<dbReference type="InterPro" id="IPR003190">
    <property type="entry name" value="Asp_decarbox"/>
</dbReference>
<dbReference type="NCBIfam" id="TIGR00223">
    <property type="entry name" value="panD"/>
    <property type="match status" value="1"/>
</dbReference>
<dbReference type="PANTHER" id="PTHR21012">
    <property type="entry name" value="ASPARTATE 1-DECARBOXYLASE"/>
    <property type="match status" value="1"/>
</dbReference>
<dbReference type="PANTHER" id="PTHR21012:SF0">
    <property type="entry name" value="ASPARTATE 1-DECARBOXYLASE"/>
    <property type="match status" value="1"/>
</dbReference>
<dbReference type="Pfam" id="PF02261">
    <property type="entry name" value="Asp_decarbox"/>
    <property type="match status" value="1"/>
</dbReference>
<dbReference type="PIRSF" id="PIRSF006246">
    <property type="entry name" value="Asp_decarbox"/>
    <property type="match status" value="1"/>
</dbReference>
<dbReference type="SUPFAM" id="SSF50692">
    <property type="entry name" value="ADC-like"/>
    <property type="match status" value="1"/>
</dbReference>